<reference key="1">
    <citation type="journal article" date="2010" name="BMC Genomics">
        <title>Complete genome sequence and lifestyle of black-pigmented Corynebacterium aurimucosum ATCC 700975 (formerly C. nigricans CN-1) isolated from a vaginal swab of a woman with spontaneous abortion.</title>
        <authorList>
            <person name="Trost E."/>
            <person name="Gotker S."/>
            <person name="Schneider J."/>
            <person name="Schneiker-Bekel S."/>
            <person name="Szczepanowski R."/>
            <person name="Tilker A."/>
            <person name="Viehoever P."/>
            <person name="Arnold W."/>
            <person name="Bekel T."/>
            <person name="Blom J."/>
            <person name="Gartemann K.H."/>
            <person name="Linke B."/>
            <person name="Goesmann A."/>
            <person name="Puhler A."/>
            <person name="Shukla S.K."/>
            <person name="Tauch A."/>
        </authorList>
    </citation>
    <scope>NUCLEOTIDE SEQUENCE [LARGE SCALE GENOMIC DNA]</scope>
    <source>
        <strain>ATCC 700975 / DSM 44827 / CIP 107346 / CN-1</strain>
    </source>
</reference>
<proteinExistence type="inferred from homology"/>
<dbReference type="EMBL" id="CP001601">
    <property type="protein sequence ID" value="ACP32952.1"/>
    <property type="molecule type" value="Genomic_DNA"/>
</dbReference>
<dbReference type="RefSeq" id="WP_010190075.1">
    <property type="nucleotide sequence ID" value="NZ_ACLH01000081.1"/>
</dbReference>
<dbReference type="SMR" id="C3PGJ8"/>
<dbReference type="STRING" id="548476.cauri_1359"/>
<dbReference type="GeneID" id="31923985"/>
<dbReference type="KEGG" id="car:cauri_1359"/>
<dbReference type="eggNOG" id="COG0291">
    <property type="taxonomic scope" value="Bacteria"/>
</dbReference>
<dbReference type="HOGENOM" id="CLU_169643_4_2_11"/>
<dbReference type="OrthoDB" id="9804851at2"/>
<dbReference type="Proteomes" id="UP000002077">
    <property type="component" value="Chromosome"/>
</dbReference>
<dbReference type="GO" id="GO:0022625">
    <property type="term" value="C:cytosolic large ribosomal subunit"/>
    <property type="evidence" value="ECO:0007669"/>
    <property type="project" value="TreeGrafter"/>
</dbReference>
<dbReference type="GO" id="GO:0003735">
    <property type="term" value="F:structural constituent of ribosome"/>
    <property type="evidence" value="ECO:0007669"/>
    <property type="project" value="InterPro"/>
</dbReference>
<dbReference type="GO" id="GO:0006412">
    <property type="term" value="P:translation"/>
    <property type="evidence" value="ECO:0007669"/>
    <property type="project" value="UniProtKB-UniRule"/>
</dbReference>
<dbReference type="FunFam" id="4.10.410.60:FF:000001">
    <property type="entry name" value="50S ribosomal protein L35"/>
    <property type="match status" value="1"/>
</dbReference>
<dbReference type="Gene3D" id="4.10.410.60">
    <property type="match status" value="1"/>
</dbReference>
<dbReference type="HAMAP" id="MF_00514">
    <property type="entry name" value="Ribosomal_bL35"/>
    <property type="match status" value="1"/>
</dbReference>
<dbReference type="InterPro" id="IPR001706">
    <property type="entry name" value="Ribosomal_bL35"/>
</dbReference>
<dbReference type="InterPro" id="IPR021137">
    <property type="entry name" value="Ribosomal_bL35-like"/>
</dbReference>
<dbReference type="InterPro" id="IPR037229">
    <property type="entry name" value="Ribosomal_bL35_sf"/>
</dbReference>
<dbReference type="NCBIfam" id="TIGR00001">
    <property type="entry name" value="rpmI_bact"/>
    <property type="match status" value="1"/>
</dbReference>
<dbReference type="PANTHER" id="PTHR33343">
    <property type="entry name" value="54S RIBOSOMAL PROTEIN BL35M"/>
    <property type="match status" value="1"/>
</dbReference>
<dbReference type="PANTHER" id="PTHR33343:SF1">
    <property type="entry name" value="LARGE RIBOSOMAL SUBUNIT PROTEIN BL35M"/>
    <property type="match status" value="1"/>
</dbReference>
<dbReference type="Pfam" id="PF01632">
    <property type="entry name" value="Ribosomal_L35p"/>
    <property type="match status" value="1"/>
</dbReference>
<dbReference type="PRINTS" id="PR00064">
    <property type="entry name" value="RIBOSOMALL35"/>
</dbReference>
<dbReference type="SUPFAM" id="SSF143034">
    <property type="entry name" value="L35p-like"/>
    <property type="match status" value="1"/>
</dbReference>
<feature type="chain" id="PRO_1000194067" description="Large ribosomal subunit protein bL35">
    <location>
        <begin position="1"/>
        <end position="64"/>
    </location>
</feature>
<feature type="region of interest" description="Disordered" evidence="2">
    <location>
        <begin position="1"/>
        <end position="48"/>
    </location>
</feature>
<feature type="compositionally biased region" description="Basic residues" evidence="2">
    <location>
        <begin position="1"/>
        <end position="14"/>
    </location>
</feature>
<feature type="compositionally biased region" description="Basic and acidic residues" evidence="2">
    <location>
        <begin position="21"/>
        <end position="36"/>
    </location>
</feature>
<keyword id="KW-1185">Reference proteome</keyword>
<keyword id="KW-0687">Ribonucleoprotein</keyword>
<keyword id="KW-0689">Ribosomal protein</keyword>
<accession>C3PGJ8</accession>
<comment type="similarity">
    <text evidence="1">Belongs to the bacterial ribosomal protein bL35 family.</text>
</comment>
<gene>
    <name evidence="1" type="primary">rpmI</name>
    <name type="ordered locus">cauri_1359</name>
</gene>
<sequence length="64" mass="7333">MKQKTHKGTAKRIKVTGSGKLRREQANRRHLLEGKPSKRTRRLKGTEDVAKADTKRVKRLLGRA</sequence>
<protein>
    <recommendedName>
        <fullName evidence="1">Large ribosomal subunit protein bL35</fullName>
    </recommendedName>
    <alternativeName>
        <fullName evidence="3">50S ribosomal protein L35</fullName>
    </alternativeName>
</protein>
<evidence type="ECO:0000255" key="1">
    <source>
        <dbReference type="HAMAP-Rule" id="MF_00514"/>
    </source>
</evidence>
<evidence type="ECO:0000256" key="2">
    <source>
        <dbReference type="SAM" id="MobiDB-lite"/>
    </source>
</evidence>
<evidence type="ECO:0000305" key="3"/>
<organism>
    <name type="scientific">Corynebacterium aurimucosum (strain ATCC 700975 / DSM 44827 / CIP 107346 / CN-1)</name>
    <name type="common">Corynebacterium nigricans</name>
    <dbReference type="NCBI Taxonomy" id="548476"/>
    <lineage>
        <taxon>Bacteria</taxon>
        <taxon>Bacillati</taxon>
        <taxon>Actinomycetota</taxon>
        <taxon>Actinomycetes</taxon>
        <taxon>Mycobacteriales</taxon>
        <taxon>Corynebacteriaceae</taxon>
        <taxon>Corynebacterium</taxon>
    </lineage>
</organism>
<name>RL35_CORA7</name>